<reference key="1">
    <citation type="journal article" date="2005" name="Proc. Natl. Acad. Sci. U.S.A.">
        <title>Complete genome sequence of Vibrio fischeri: a symbiotic bacterium with pathogenic congeners.</title>
        <authorList>
            <person name="Ruby E.G."/>
            <person name="Urbanowski M."/>
            <person name="Campbell J."/>
            <person name="Dunn A."/>
            <person name="Faini M."/>
            <person name="Gunsalus R."/>
            <person name="Lostroh P."/>
            <person name="Lupp C."/>
            <person name="McCann J."/>
            <person name="Millikan D."/>
            <person name="Schaefer A."/>
            <person name="Stabb E."/>
            <person name="Stevens A."/>
            <person name="Visick K."/>
            <person name="Whistler C."/>
            <person name="Greenberg E.P."/>
        </authorList>
    </citation>
    <scope>NUCLEOTIDE SEQUENCE [LARGE SCALE GENOMIC DNA]</scope>
    <source>
        <strain>ATCC 700601 / ES114</strain>
    </source>
</reference>
<accession>Q5E4I0</accession>
<feature type="chain" id="PRO_0000211645" description="Chaperone protein TorD">
    <location>
        <begin position="1"/>
        <end position="215"/>
    </location>
</feature>
<sequence>MNELTAFNEQRAEIYWWLSSLLSAELTTEQLEQYGSFEVRTFLSNLAETPELSDSVNALIEKLNAVQGREDAQLELSADFCDAFLGSDKSSALPYASMYLDKSGLLNAKPAQDMREWLTKYNIAQKAEFNEPADHIAIELDFLGNLIVMTNQQVSEDEFEAYMSAQLTFINEQLLSWTPRFNEICIERDKFGFYAAVTGLLVTFLKLDVKFLAGE</sequence>
<proteinExistence type="inferred from homology"/>
<protein>
    <recommendedName>
        <fullName evidence="1">Chaperone protein TorD</fullName>
    </recommendedName>
</protein>
<evidence type="ECO:0000255" key="1">
    <source>
        <dbReference type="HAMAP-Rule" id="MF_01150"/>
    </source>
</evidence>
<name>TORD_ALIF1</name>
<gene>
    <name evidence="1" type="primary">torD</name>
    <name type="ordered locus">VF_1571</name>
</gene>
<comment type="function">
    <text evidence="1">Involved in the biogenesis of TorA. Acts on TorA before the insertion of the molybdenum cofactor and, as a result, probably favors a conformation of the apoenzyme that is competent for acquiring the cofactor.</text>
</comment>
<comment type="subcellular location">
    <subcellularLocation>
        <location evidence="1">Cytoplasm</location>
    </subcellularLocation>
</comment>
<comment type="similarity">
    <text evidence="1">Belongs to the TorD/DmsD family. TorD subfamily.</text>
</comment>
<keyword id="KW-0143">Chaperone</keyword>
<keyword id="KW-0963">Cytoplasm</keyword>
<keyword id="KW-1185">Reference proteome</keyword>
<dbReference type="EMBL" id="CP000020">
    <property type="protein sequence ID" value="AAW86066.1"/>
    <property type="molecule type" value="Genomic_DNA"/>
</dbReference>
<dbReference type="RefSeq" id="WP_011262143.1">
    <property type="nucleotide sequence ID" value="NC_006840.2"/>
</dbReference>
<dbReference type="RefSeq" id="YP_204954.1">
    <property type="nucleotide sequence ID" value="NC_006840.2"/>
</dbReference>
<dbReference type="SMR" id="Q5E4I0"/>
<dbReference type="STRING" id="312309.VF_1571"/>
<dbReference type="EnsemblBacteria" id="AAW86066">
    <property type="protein sequence ID" value="AAW86066"/>
    <property type="gene ID" value="VF_1571"/>
</dbReference>
<dbReference type="GeneID" id="54164251"/>
<dbReference type="KEGG" id="vfi:VF_1571"/>
<dbReference type="PATRIC" id="fig|312309.11.peg.1590"/>
<dbReference type="eggNOG" id="COG3381">
    <property type="taxonomic scope" value="Bacteria"/>
</dbReference>
<dbReference type="HOGENOM" id="CLU_077650_4_0_6"/>
<dbReference type="OrthoDB" id="7849731at2"/>
<dbReference type="Proteomes" id="UP000000537">
    <property type="component" value="Chromosome I"/>
</dbReference>
<dbReference type="GO" id="GO:0005737">
    <property type="term" value="C:cytoplasm"/>
    <property type="evidence" value="ECO:0007669"/>
    <property type="project" value="UniProtKB-SubCell"/>
</dbReference>
<dbReference type="GO" id="GO:0051259">
    <property type="term" value="P:protein complex oligomerization"/>
    <property type="evidence" value="ECO:0007669"/>
    <property type="project" value="InterPro"/>
</dbReference>
<dbReference type="GO" id="GO:0006457">
    <property type="term" value="P:protein folding"/>
    <property type="evidence" value="ECO:0007669"/>
    <property type="project" value="UniProtKB-UniRule"/>
</dbReference>
<dbReference type="Gene3D" id="1.20.120.1820">
    <property type="match status" value="1"/>
</dbReference>
<dbReference type="Gene3D" id="1.20.1280.20">
    <property type="entry name" value="HscB, C-terminal domain"/>
    <property type="match status" value="1"/>
</dbReference>
<dbReference type="HAMAP" id="MF_01150">
    <property type="entry name" value="TorD"/>
    <property type="match status" value="1"/>
</dbReference>
<dbReference type="InterPro" id="IPR023069">
    <property type="entry name" value="Chaperone_TorD"/>
</dbReference>
<dbReference type="InterPro" id="IPR020945">
    <property type="entry name" value="DMSO/NO3_reduct_chaperone"/>
</dbReference>
<dbReference type="InterPro" id="IPR036386">
    <property type="entry name" value="HscB_C_sf"/>
</dbReference>
<dbReference type="InterPro" id="IPR036411">
    <property type="entry name" value="TorD-like_sf"/>
</dbReference>
<dbReference type="InterPro" id="IPR050289">
    <property type="entry name" value="TorD/DmsD_chaperones"/>
</dbReference>
<dbReference type="NCBIfam" id="NF003442">
    <property type="entry name" value="PRK04976.1"/>
    <property type="match status" value="1"/>
</dbReference>
<dbReference type="PANTHER" id="PTHR34227:SF11">
    <property type="entry name" value="CHAPERONE PROTEIN TORD"/>
    <property type="match status" value="1"/>
</dbReference>
<dbReference type="PANTHER" id="PTHR34227">
    <property type="entry name" value="CHAPERONE PROTEIN YCDY"/>
    <property type="match status" value="1"/>
</dbReference>
<dbReference type="Pfam" id="PF02613">
    <property type="entry name" value="Nitrate_red_del"/>
    <property type="match status" value="1"/>
</dbReference>
<dbReference type="SUPFAM" id="SSF89155">
    <property type="entry name" value="TorD-like"/>
    <property type="match status" value="1"/>
</dbReference>
<organism>
    <name type="scientific">Aliivibrio fischeri (strain ATCC 700601 / ES114)</name>
    <name type="common">Vibrio fischeri</name>
    <dbReference type="NCBI Taxonomy" id="312309"/>
    <lineage>
        <taxon>Bacteria</taxon>
        <taxon>Pseudomonadati</taxon>
        <taxon>Pseudomonadota</taxon>
        <taxon>Gammaproteobacteria</taxon>
        <taxon>Vibrionales</taxon>
        <taxon>Vibrionaceae</taxon>
        <taxon>Aliivibrio</taxon>
    </lineage>
</organism>